<dbReference type="EMBL" id="U55816">
    <property type="protein sequence ID" value="AAC52635.1"/>
    <property type="molecule type" value="mRNA"/>
</dbReference>
<dbReference type="EMBL" id="EF641113">
    <property type="protein sequence ID" value="ABV03586.1"/>
    <property type="molecule type" value="mRNA"/>
</dbReference>
<dbReference type="PIR" id="T31432">
    <property type="entry name" value="T31432"/>
</dbReference>
<dbReference type="RefSeq" id="NP_001380604.1">
    <molecule id="Q63633-1"/>
    <property type="nucleotide sequence ID" value="NM_001393675.1"/>
</dbReference>
<dbReference type="RefSeq" id="NP_599190.1">
    <molecule id="Q63633-2"/>
    <property type="nucleotide sequence ID" value="NM_134363.2"/>
</dbReference>
<dbReference type="SMR" id="Q63633"/>
<dbReference type="BioGRID" id="251211">
    <property type="interactions" value="5"/>
</dbReference>
<dbReference type="ELM" id="Q63633"/>
<dbReference type="FunCoup" id="Q63633">
    <property type="interactions" value="1882"/>
</dbReference>
<dbReference type="IntAct" id="Q63633">
    <property type="interactions" value="3"/>
</dbReference>
<dbReference type="MINT" id="Q63633"/>
<dbReference type="STRING" id="10116.ENSRNOP00000062103"/>
<dbReference type="BindingDB" id="Q63633"/>
<dbReference type="ChEMBL" id="CHEMBL1075108"/>
<dbReference type="TCDB" id="2.A.30.1.14">
    <property type="family name" value="the cation-chloride cotransporter (ccc) family"/>
</dbReference>
<dbReference type="GlyCosmos" id="Q63633">
    <property type="glycosylation" value="2 sites, No reported glycans"/>
</dbReference>
<dbReference type="GlyGen" id="Q63633">
    <property type="glycosylation" value="4 sites, 6 N-linked glycans (1 site)"/>
</dbReference>
<dbReference type="iPTMnet" id="Q63633"/>
<dbReference type="PhosphoSitePlus" id="Q63633"/>
<dbReference type="PaxDb" id="10116-ENSRNOP00000062103"/>
<dbReference type="ABCD" id="Q63633">
    <property type="antibodies" value="1 sequenced antibody"/>
</dbReference>
<dbReference type="Ensembl" id="ENSRNOT00000065184.5">
    <molecule id="Q63633-1"/>
    <property type="protein sequence ID" value="ENSRNOP00000062103.4"/>
    <property type="gene ID" value="ENSRNOG00000018111.9"/>
</dbReference>
<dbReference type="Ensembl" id="ENSRNOT00000114972.1">
    <molecule id="Q63633-2"/>
    <property type="protein sequence ID" value="ENSRNOP00000093106.1"/>
    <property type="gene ID" value="ENSRNOG00000018111.9"/>
</dbReference>
<dbReference type="GeneID" id="171373"/>
<dbReference type="KEGG" id="rno:171373"/>
<dbReference type="AGR" id="RGD:620811"/>
<dbReference type="CTD" id="57468"/>
<dbReference type="RGD" id="620811">
    <property type="gene designation" value="Slc12a5"/>
</dbReference>
<dbReference type="eggNOG" id="KOG2082">
    <property type="taxonomic scope" value="Eukaryota"/>
</dbReference>
<dbReference type="GeneTree" id="ENSGT00940000160827"/>
<dbReference type="InParanoid" id="Q63633"/>
<dbReference type="OMA" id="LRIDAMI"/>
<dbReference type="OrthoDB" id="2020542at2759"/>
<dbReference type="PhylomeDB" id="Q63633"/>
<dbReference type="Reactome" id="R-RNO-426117">
    <property type="pathway name" value="Cation-coupled Chloride cotransporters"/>
</dbReference>
<dbReference type="PRO" id="PR:Q63633"/>
<dbReference type="Proteomes" id="UP000002494">
    <property type="component" value="Chromosome 3"/>
</dbReference>
<dbReference type="GO" id="GO:0071944">
    <property type="term" value="C:cell periphery"/>
    <property type="evidence" value="ECO:0000266"/>
    <property type="project" value="RGD"/>
</dbReference>
<dbReference type="GO" id="GO:0032590">
    <property type="term" value="C:dendrite membrane"/>
    <property type="evidence" value="ECO:0000314"/>
    <property type="project" value="RGD"/>
</dbReference>
<dbReference type="GO" id="GO:0098978">
    <property type="term" value="C:glutamatergic synapse"/>
    <property type="evidence" value="ECO:0000314"/>
    <property type="project" value="SynGO"/>
</dbReference>
<dbReference type="GO" id="GO:0016020">
    <property type="term" value="C:membrane"/>
    <property type="evidence" value="ECO:0000250"/>
    <property type="project" value="UniProtKB"/>
</dbReference>
<dbReference type="GO" id="GO:0043005">
    <property type="term" value="C:neuron projection"/>
    <property type="evidence" value="ECO:0000266"/>
    <property type="project" value="RGD"/>
</dbReference>
<dbReference type="GO" id="GO:0043025">
    <property type="term" value="C:neuronal cell body"/>
    <property type="evidence" value="ECO:0000266"/>
    <property type="project" value="RGD"/>
</dbReference>
<dbReference type="GO" id="GO:0043204">
    <property type="term" value="C:perikaryon"/>
    <property type="evidence" value="ECO:0000314"/>
    <property type="project" value="RGD"/>
</dbReference>
<dbReference type="GO" id="GO:0005886">
    <property type="term" value="C:plasma membrane"/>
    <property type="evidence" value="ECO:0000266"/>
    <property type="project" value="RGD"/>
</dbReference>
<dbReference type="GO" id="GO:0099634">
    <property type="term" value="C:postsynaptic specialization membrane"/>
    <property type="evidence" value="ECO:0000266"/>
    <property type="project" value="RGD"/>
</dbReference>
<dbReference type="GO" id="GO:0008519">
    <property type="term" value="F:ammonium channel activity"/>
    <property type="evidence" value="ECO:0000314"/>
    <property type="project" value="RGD"/>
</dbReference>
<dbReference type="GO" id="GO:0015108">
    <property type="term" value="F:chloride transmembrane transporter activity"/>
    <property type="evidence" value="ECO:0000266"/>
    <property type="project" value="RGD"/>
</dbReference>
<dbReference type="GO" id="GO:0046872">
    <property type="term" value="F:metal ion binding"/>
    <property type="evidence" value="ECO:0007669"/>
    <property type="project" value="UniProtKB-KW"/>
</dbReference>
<dbReference type="GO" id="GO:0015379">
    <property type="term" value="F:potassium:chloride symporter activity"/>
    <property type="evidence" value="ECO:0000314"/>
    <property type="project" value="UniProtKB"/>
</dbReference>
<dbReference type="GO" id="GO:0072488">
    <property type="term" value="P:ammonium transmembrane transport"/>
    <property type="evidence" value="ECO:0000314"/>
    <property type="project" value="RGD"/>
</dbReference>
<dbReference type="GO" id="GO:0006884">
    <property type="term" value="P:cell volume homeostasis"/>
    <property type="evidence" value="ECO:0000318"/>
    <property type="project" value="GO_Central"/>
</dbReference>
<dbReference type="GO" id="GO:0007268">
    <property type="term" value="P:chemical synaptic transmission"/>
    <property type="evidence" value="ECO:0000266"/>
    <property type="project" value="RGD"/>
</dbReference>
<dbReference type="GO" id="GO:0055064">
    <property type="term" value="P:chloride ion homeostasis"/>
    <property type="evidence" value="ECO:0000318"/>
    <property type="project" value="GO_Central"/>
</dbReference>
<dbReference type="GO" id="GO:1902476">
    <property type="term" value="P:chloride transmembrane transport"/>
    <property type="evidence" value="ECO:0000318"/>
    <property type="project" value="GO_Central"/>
</dbReference>
<dbReference type="GO" id="GO:0006821">
    <property type="term" value="P:chloride transport"/>
    <property type="evidence" value="ECO:0000314"/>
    <property type="project" value="RGD"/>
</dbReference>
<dbReference type="GO" id="GO:0060996">
    <property type="term" value="P:dendritic spine development"/>
    <property type="evidence" value="ECO:0000314"/>
    <property type="project" value="UniProtKB"/>
</dbReference>
<dbReference type="GO" id="GO:0006971">
    <property type="term" value="P:hypotonic response"/>
    <property type="evidence" value="ECO:0000250"/>
    <property type="project" value="UniProtKB"/>
</dbReference>
<dbReference type="GO" id="GO:0030644">
    <property type="term" value="P:intracellular chloride ion homeostasis"/>
    <property type="evidence" value="ECO:0000266"/>
    <property type="project" value="RGD"/>
</dbReference>
<dbReference type="GO" id="GO:0051452">
    <property type="term" value="P:intracellular pH reduction"/>
    <property type="evidence" value="ECO:0000314"/>
    <property type="project" value="RGD"/>
</dbReference>
<dbReference type="GO" id="GO:0007612">
    <property type="term" value="P:learning"/>
    <property type="evidence" value="ECO:0000266"/>
    <property type="project" value="RGD"/>
</dbReference>
<dbReference type="GO" id="GO:0006811">
    <property type="term" value="P:monoatomic ion transport"/>
    <property type="evidence" value="ECO:0000266"/>
    <property type="project" value="RGD"/>
</dbReference>
<dbReference type="GO" id="GO:0035264">
    <property type="term" value="P:multicellular organism growth"/>
    <property type="evidence" value="ECO:0000266"/>
    <property type="project" value="RGD"/>
</dbReference>
<dbReference type="GO" id="GO:0098970">
    <property type="term" value="P:postsynaptic neurotransmitter receptor diffusion trapping"/>
    <property type="evidence" value="ECO:0000314"/>
    <property type="project" value="SynGO"/>
</dbReference>
<dbReference type="GO" id="GO:0055075">
    <property type="term" value="P:potassium ion homeostasis"/>
    <property type="evidence" value="ECO:0000318"/>
    <property type="project" value="GO_Central"/>
</dbReference>
<dbReference type="GO" id="GO:1990573">
    <property type="term" value="P:potassium ion import across plasma membrane"/>
    <property type="evidence" value="ECO:0000318"/>
    <property type="project" value="GO_Central"/>
</dbReference>
<dbReference type="GO" id="GO:0071805">
    <property type="term" value="P:potassium ion transmembrane transport"/>
    <property type="evidence" value="ECO:0000314"/>
    <property type="project" value="UniProtKB"/>
</dbReference>
<dbReference type="GO" id="GO:0006813">
    <property type="term" value="P:potassium ion transport"/>
    <property type="evidence" value="ECO:0000314"/>
    <property type="project" value="RGD"/>
</dbReference>
<dbReference type="GO" id="GO:0150052">
    <property type="term" value="P:regulation of postsynapse assembly"/>
    <property type="evidence" value="ECO:0000314"/>
    <property type="project" value="SynGO"/>
</dbReference>
<dbReference type="GO" id="GO:0009410">
    <property type="term" value="P:response to xenobiotic stimulus"/>
    <property type="evidence" value="ECO:0000266"/>
    <property type="project" value="RGD"/>
</dbReference>
<dbReference type="GO" id="GO:0040040">
    <property type="term" value="P:thermosensory behavior"/>
    <property type="evidence" value="ECO:0000266"/>
    <property type="project" value="RGD"/>
</dbReference>
<dbReference type="FunFam" id="1.20.1740.10:FF:000040">
    <property type="entry name" value="Solute carrier family 12 member 6"/>
    <property type="match status" value="1"/>
</dbReference>
<dbReference type="FunFam" id="1.20.1740.10:FF:000123">
    <property type="entry name" value="Uncharacterized protein"/>
    <property type="match status" value="1"/>
</dbReference>
<dbReference type="Gene3D" id="1.20.1740.10">
    <property type="entry name" value="Amino acid/polyamine transporter I"/>
    <property type="match status" value="1"/>
</dbReference>
<dbReference type="InterPro" id="IPR004841">
    <property type="entry name" value="AA-permease/SLC12A_dom"/>
</dbReference>
<dbReference type="InterPro" id="IPR000076">
    <property type="entry name" value="KCL_cotranspt"/>
</dbReference>
<dbReference type="InterPro" id="IPR018491">
    <property type="entry name" value="SLC12_C"/>
</dbReference>
<dbReference type="InterPro" id="IPR004842">
    <property type="entry name" value="SLC12A_fam"/>
</dbReference>
<dbReference type="NCBIfam" id="TIGR00930">
    <property type="entry name" value="2a30"/>
    <property type="match status" value="1"/>
</dbReference>
<dbReference type="PANTHER" id="PTHR11827:SF54">
    <property type="entry name" value="SOLUTE CARRIER FAMILY 12 MEMBER 5"/>
    <property type="match status" value="1"/>
</dbReference>
<dbReference type="PANTHER" id="PTHR11827">
    <property type="entry name" value="SOLUTE CARRIER FAMILY 12, CATION COTRANSPORTERS"/>
    <property type="match status" value="1"/>
</dbReference>
<dbReference type="Pfam" id="PF00324">
    <property type="entry name" value="AA_permease"/>
    <property type="match status" value="2"/>
</dbReference>
<dbReference type="Pfam" id="PF03522">
    <property type="entry name" value="SLC12"/>
    <property type="match status" value="3"/>
</dbReference>
<dbReference type="PRINTS" id="PR01081">
    <property type="entry name" value="KCLTRNSPORT"/>
</dbReference>
<comment type="function">
    <text evidence="6 7 9">Mediates electroneutral potassium-chloride cotransport in mature neurons and is required for neuronal Cl(-) homeostasis (PubMed:11551954). As major extruder of intracellular chloride, it establishes the low neuronal Cl(-) levels required for chloride influx after binding of GABA-A and glycine to their receptors, with subsequent hyperpolarization and neuronal inhibition (PubMed:9930699). Involved in the regulation of dendritic spine formation and maturation (PubMed:22345354).</text>
</comment>
<comment type="catalytic activity">
    <reaction evidence="6">
        <text>K(+)(in) + chloride(in) = K(+)(out) + chloride(out)</text>
        <dbReference type="Rhea" id="RHEA:72427"/>
        <dbReference type="ChEBI" id="CHEBI:17996"/>
        <dbReference type="ChEBI" id="CHEBI:29103"/>
    </reaction>
</comment>
<comment type="activity regulation">
    <text evidence="8">Inhibited following phosphorylation by OXSR1/OSR1 and STK39/SPAK: phosphorylation takes place downstream of WNK kinases (WNK1, WNK2, WNK3 or WNK4) in response to hyperosmotic stress and subsequent cell shrinkage.</text>
</comment>
<comment type="subunit">
    <text evidence="2 13">Homodimer; adopts a domain-swap conformation at the scissor helices connecting the transmembrane domain and C-terminal domain (By similarity). Heterodimer wHeterodimer with K-Cl cotransporters SLC12A6 and SLC12A7 (By similarity). Interacts with AP2A1 (Probable).</text>
</comment>
<comment type="interaction">
    <interactant intactId="EBI-1811510">
        <id>Q63633</id>
    </interactant>
    <interactant intactId="EBI-1811542">
        <id>Q7TPH6</id>
        <label>Mycbp2</label>
    </interactant>
    <organismsDiffer>true</organismsDiffer>
    <experiments>4</experiments>
</comment>
<comment type="subcellular location">
    <subcellularLocation>
        <location evidence="1">Cell membrane</location>
        <topology evidence="1">Multi-pass membrane protein</topology>
    </subcellularLocation>
    <subcellularLocation>
        <location evidence="1">Cell projection</location>
        <location evidence="1">Dendrite</location>
    </subcellularLocation>
    <text evidence="1">Detected on dendrites, but not on axons of spinal cord neurons and at GPHN-positive inhibitory synapses.</text>
</comment>
<comment type="alternative products">
    <event type="alternative splicing"/>
    <isoform>
        <id>Q63633-1</id>
        <name>1</name>
        <name>KCC2a</name>
        <sequence type="displayed"/>
    </isoform>
    <isoform>
        <id>Q63633-2</id>
        <name>2</name>
        <name>KCC2b</name>
        <sequence type="described" ref="VSP_029911"/>
    </isoform>
</comment>
<comment type="tissue specificity">
    <text evidence="9">Highly expressed in brain. Not detected in other tissues. Highly expressed in pyramidal neurons and in neurons throughout the cortex, hippocampus, the granular layer of the cerebellum and in groups of neurons throughout the brainstem. Barely detectable in dorsal-root ganglions.</text>
</comment>
<comment type="developmental stage">
    <text evidence="9">Detected in thalamus, but not in hippocampus and neocortex at 20 dpc. At birth barely detectable in hippocampus. Expression increases steeply from day 5 to day 9 and then stabilizes at adult levels.</text>
</comment>
<comment type="PTM">
    <text evidence="8">Phosphorylated at Thr-929 and Thr-1030 by OXSR1/OSR1 and STK39/SPAK downstream of WNK kinases (WNK1, WNK2, WNK3 or WNK4), inhibiting the potassium-chloride cotransport activity.</text>
</comment>
<comment type="similarity">
    <text evidence="12">Belongs to the SLC12A transporter family. K/Cl co-transporter subfamily.</text>
</comment>
<evidence type="ECO:0000250" key="1">
    <source>
        <dbReference type="UniProtKB" id="Q91V14"/>
    </source>
</evidence>
<evidence type="ECO:0000250" key="2">
    <source>
        <dbReference type="UniProtKB" id="Q9H2X9"/>
    </source>
</evidence>
<evidence type="ECO:0000250" key="3">
    <source>
        <dbReference type="UniProtKB" id="Q9UP95"/>
    </source>
</evidence>
<evidence type="ECO:0000255" key="4"/>
<evidence type="ECO:0000256" key="5">
    <source>
        <dbReference type="SAM" id="MobiDB-lite"/>
    </source>
</evidence>
<evidence type="ECO:0000269" key="6">
    <source>
    </source>
</evidence>
<evidence type="ECO:0000269" key="7">
    <source>
    </source>
</evidence>
<evidence type="ECO:0000269" key="8">
    <source>
    </source>
</evidence>
<evidence type="ECO:0000269" key="9">
    <source>
    </source>
</evidence>
<evidence type="ECO:0000303" key="10">
    <source>
    </source>
</evidence>
<evidence type="ECO:0000303" key="11">
    <source>
    </source>
</evidence>
<evidence type="ECO:0000305" key="12"/>
<evidence type="ECO:0000305" key="13">
    <source>
    </source>
</evidence>
<evidence type="ECO:0007744" key="14">
    <source>
    </source>
</evidence>
<proteinExistence type="evidence at protein level"/>
<organism>
    <name type="scientific">Rattus norvegicus</name>
    <name type="common">Rat</name>
    <dbReference type="NCBI Taxonomy" id="10116"/>
    <lineage>
        <taxon>Eukaryota</taxon>
        <taxon>Metazoa</taxon>
        <taxon>Chordata</taxon>
        <taxon>Craniata</taxon>
        <taxon>Vertebrata</taxon>
        <taxon>Euteleostomi</taxon>
        <taxon>Mammalia</taxon>
        <taxon>Eutheria</taxon>
        <taxon>Euarchontoglires</taxon>
        <taxon>Glires</taxon>
        <taxon>Rodentia</taxon>
        <taxon>Myomorpha</taxon>
        <taxon>Muroidea</taxon>
        <taxon>Muridae</taxon>
        <taxon>Murinae</taxon>
        <taxon>Rattus</taxon>
    </lineage>
</organism>
<accession>Q63633</accession>
<accession>A7Y821</accession>
<protein>
    <recommendedName>
        <fullName>Solute carrier family 12 member 5</fullName>
    </recommendedName>
    <alternativeName>
        <fullName>Electroneutral potassium-chloride cotransporter 2</fullName>
    </alternativeName>
    <alternativeName>
        <fullName>Furosemide-sensitive K-Cl cotransporter</fullName>
    </alternativeName>
    <alternativeName>
        <fullName>K-Cl cotransporter 2</fullName>
        <shortName evidence="10">rKCC2</shortName>
    </alternativeName>
    <alternativeName>
        <fullName>Neuronal K-Cl cotransporter</fullName>
    </alternativeName>
</protein>
<feature type="chain" id="PRO_0000178036" description="Solute carrier family 12 member 5">
    <location>
        <begin position="1"/>
        <end position="1139"/>
    </location>
</feature>
<feature type="topological domain" description="Cytoplasmic" evidence="12">
    <location>
        <begin position="1"/>
        <end position="98"/>
    </location>
</feature>
<feature type="transmembrane region" description="Discontinuously helical; Name=1" evidence="2">
    <location>
        <begin position="99"/>
        <end position="120"/>
    </location>
</feature>
<feature type="topological domain" description="Extracellular" evidence="12">
    <location>
        <begin position="121"/>
        <end position="129"/>
    </location>
</feature>
<feature type="transmembrane region" description="Helical; Name=2" evidence="2">
    <location>
        <begin position="130"/>
        <end position="151"/>
    </location>
</feature>
<feature type="topological domain" description="Cytoplasmic" evidence="12">
    <location>
        <begin position="152"/>
        <end position="174"/>
    </location>
</feature>
<feature type="transmembrane region" description="Helical; Name=3" evidence="2">
    <location>
        <begin position="175"/>
        <end position="203"/>
    </location>
</feature>
<feature type="topological domain" description="Extracellular" evidence="12">
    <location>
        <begin position="204"/>
        <end position="229"/>
    </location>
</feature>
<feature type="transmembrane region" description="Helical; Name=4" evidence="2">
    <location>
        <begin position="230"/>
        <end position="250"/>
    </location>
</feature>
<feature type="transmembrane region" description="Helical; Name=5" evidence="2">
    <location>
        <begin position="251"/>
        <end position="276"/>
    </location>
</feature>
<feature type="topological domain" description="Extracellular" evidence="12">
    <location>
        <begin position="277"/>
        <end position="402"/>
    </location>
</feature>
<feature type="transmembrane region" description="Helical; Name=6" evidence="2">
    <location>
        <begin position="403"/>
        <end position="420"/>
    </location>
</feature>
<feature type="topological domain" description="Cytoplasmic" evidence="12">
    <location>
        <begin position="421"/>
        <end position="429"/>
    </location>
</feature>
<feature type="transmembrane region" description="Helical; Name=7" evidence="2">
    <location>
        <begin position="430"/>
        <end position="453"/>
    </location>
</feature>
<feature type="topological domain" description="Extracellular" evidence="12">
    <location>
        <begin position="454"/>
        <end position="485"/>
    </location>
</feature>
<feature type="transmembrane region" description="Helical; Name=8" evidence="2">
    <location>
        <begin position="486"/>
        <end position="513"/>
    </location>
</feature>
<feature type="topological domain" description="Cytoplasmic" evidence="12">
    <location>
        <begin position="514"/>
        <end position="534"/>
    </location>
</feature>
<feature type="transmembrane region" description="Helical; Name=9" evidence="2">
    <location>
        <begin position="535"/>
        <end position="555"/>
    </location>
</feature>
<feature type="transmembrane region" description="Helical; Name=10" evidence="2">
    <location>
        <begin position="556"/>
        <end position="578"/>
    </location>
</feature>
<feature type="topological domain" description="Cytoplasmic" evidence="12">
    <location>
        <begin position="579"/>
        <end position="592"/>
    </location>
</feature>
<feature type="transmembrane region" description="Helical; Name=11" evidence="2">
    <location>
        <begin position="593"/>
        <end position="615"/>
    </location>
</feature>
<feature type="transmembrane region" description="Helical; Name=12" evidence="2">
    <location>
        <begin position="616"/>
        <end position="632"/>
    </location>
</feature>
<feature type="topological domain" description="Cytoplasmic" evidence="12">
    <location>
        <begin position="633"/>
        <end position="1139"/>
    </location>
</feature>
<feature type="region of interest" description="Disordered" evidence="5">
    <location>
        <begin position="1"/>
        <end position="62"/>
    </location>
</feature>
<feature type="region of interest" description="Disordered" evidence="5">
    <location>
        <begin position="95"/>
        <end position="116"/>
    </location>
</feature>
<feature type="region of interest" description="Scissor helix" evidence="2">
    <location>
        <begin position="667"/>
        <end position="681"/>
    </location>
</feature>
<feature type="region of interest" description="Disordered" evidence="5">
    <location>
        <begin position="943"/>
        <end position="1025"/>
    </location>
</feature>
<feature type="region of interest" description="Disordered" evidence="5">
    <location>
        <begin position="1033"/>
        <end position="1052"/>
    </location>
</feature>
<feature type="compositionally biased region" description="Basic and acidic residues" evidence="5">
    <location>
        <begin position="21"/>
        <end position="45"/>
    </location>
</feature>
<feature type="compositionally biased region" description="Polar residues" evidence="5">
    <location>
        <begin position="46"/>
        <end position="55"/>
    </location>
</feature>
<feature type="compositionally biased region" description="Basic and acidic residues" evidence="5">
    <location>
        <begin position="98"/>
        <end position="111"/>
    </location>
</feature>
<feature type="compositionally biased region" description="Basic and acidic residues" evidence="5">
    <location>
        <begin position="945"/>
        <end position="962"/>
    </location>
</feature>
<feature type="compositionally biased region" description="Acidic residues" evidence="5">
    <location>
        <begin position="982"/>
        <end position="994"/>
    </location>
</feature>
<feature type="compositionally biased region" description="Low complexity" evidence="5">
    <location>
        <begin position="1003"/>
        <end position="1012"/>
    </location>
</feature>
<feature type="binding site" evidence="2">
    <location>
        <position position="113"/>
    </location>
    <ligand>
        <name>K(+)</name>
        <dbReference type="ChEBI" id="CHEBI:29103"/>
    </ligand>
</feature>
<feature type="binding site" evidence="2">
    <location>
        <position position="184"/>
    </location>
    <ligand>
        <name>chloride</name>
        <dbReference type="ChEBI" id="CHEBI:17996"/>
    </ligand>
</feature>
<feature type="binding site" evidence="2">
    <location>
        <position position="410"/>
    </location>
    <ligand>
        <name>K(+)</name>
        <dbReference type="ChEBI" id="CHEBI:29103"/>
    </ligand>
</feature>
<feature type="binding site" evidence="2">
    <location>
        <position position="414"/>
    </location>
    <ligand>
        <name>chloride</name>
        <dbReference type="ChEBI" id="CHEBI:17996"/>
    </ligand>
</feature>
<feature type="binding site" evidence="2">
    <location>
        <position position="415"/>
    </location>
    <ligand>
        <name>chloride</name>
        <dbReference type="ChEBI" id="CHEBI:17996"/>
    </ligand>
</feature>
<feature type="binding site" evidence="2">
    <location>
        <position position="446"/>
    </location>
    <ligand>
        <name>K(+)</name>
        <dbReference type="ChEBI" id="CHEBI:29103"/>
    </ligand>
</feature>
<feature type="binding site" evidence="2">
    <location>
        <position position="569"/>
    </location>
    <ligand>
        <name>chloride</name>
        <dbReference type="ChEBI" id="CHEBI:17996"/>
    </ligand>
</feature>
<feature type="modified residue" description="Phosphothreonine" evidence="14">
    <location>
        <position position="57"/>
    </location>
</feature>
<feature type="modified residue" description="Phosphothreonine; by OXSR1 and STK39" evidence="8">
    <location>
        <position position="929"/>
    </location>
</feature>
<feature type="modified residue" description="Phosphothreonine; by OXSR1 and STK39" evidence="8">
    <location>
        <position position="1030"/>
    </location>
</feature>
<feature type="modified residue" description="Phosphoserine" evidence="14">
    <location>
        <position position="1045"/>
    </location>
</feature>
<feature type="modified residue" description="Phosphoserine" evidence="14">
    <location>
        <position position="1048"/>
    </location>
</feature>
<feature type="modified residue" description="Phosphoserine" evidence="14">
    <location>
        <position position="1049"/>
    </location>
</feature>
<feature type="glycosylation site" description="N-linked (GlcNAc...) asparagine" evidence="4">
    <location>
        <position position="314"/>
    </location>
</feature>
<feature type="glycosylation site" description="N-linked (GlcNAc...) asparagine" evidence="4">
    <location>
        <position position="333"/>
    </location>
</feature>
<feature type="glycosylation site" description="N-linked (GlcNAc...) asparagine" evidence="4">
    <location>
        <position position="351"/>
    </location>
</feature>
<feature type="glycosylation site" description="N-linked (GlcNAc...) asparagine" evidence="4">
    <location>
        <position position="362"/>
    </location>
</feature>
<feature type="disulfide bond" evidence="3">
    <location>
        <begin position="310"/>
        <end position="325"/>
    </location>
</feature>
<feature type="disulfide bond" evidence="3">
    <location>
        <begin position="345"/>
        <end position="354"/>
    </location>
</feature>
<feature type="splice variant" id="VSP_029911" description="In isoform 2." evidence="11">
    <original>MSRRFTVTSLPPAASAASADPESRRHSVADPRRLPREDVK</original>
    <variation>MLNNLTDCEDGDGGANP</variation>
    <location>
        <begin position="1"/>
        <end position="40"/>
    </location>
</feature>
<feature type="mutagenesis site" description="Decreased phosphorylation by WNK kinases, leading to increased potassium-chloride cotransport activity; when associated with A-1030." evidence="8">
    <original>T</original>
    <variation>A</variation>
    <location>
        <position position="929"/>
    </location>
</feature>
<feature type="mutagenesis site" description="Mimics phosphorylation, leading to increased potassium-chloride cotransport activity; when associated with E-1030." evidence="8">
    <original>T</original>
    <variation>E</variation>
    <location>
        <position position="929"/>
    </location>
</feature>
<feature type="mutagenesis site" description="Decreased phosphorylation by WNK kinases, leading to increased potassium-chloride cotransport activity; when associated with A-929." evidence="8">
    <original>T</original>
    <variation>A</variation>
    <location>
        <position position="1030"/>
    </location>
</feature>
<feature type="mutagenesis site" description="Mimics phosphorylation, leading to increased potassium-chloride cotransport activity; when associated with E-929." evidence="8">
    <original>T</original>
    <variation>E</variation>
    <location>
        <position position="1030"/>
    </location>
</feature>
<reference key="1">
    <citation type="journal article" date="1996" name="J. Biol. Chem.">
        <title>Molecular characterization of a putative K-Cl cotransporter in rat brain. A neuronal-specific isoform.</title>
        <authorList>
            <person name="Payne J.A."/>
            <person name="Stevenson T.J."/>
            <person name="Donaldson L.F."/>
        </authorList>
    </citation>
    <scope>NUCLEOTIDE SEQUENCE [MRNA] (ISOFORM 2)</scope>
    <source>
        <strain>Sprague-Dawley</strain>
        <tissue>Brain</tissue>
    </source>
</reference>
<reference key="2">
    <citation type="journal article" date="2007" name="J. Biol. Chem.">
        <title>A novel N-terminal isoform of the neuron-specific K-Cl cotransporter KCC2.</title>
        <authorList>
            <person name="Uvarov P."/>
            <person name="Ludwig A."/>
            <person name="Markkanen M."/>
            <person name="Pruunsild P."/>
            <person name="Kaila K."/>
            <person name="Delpire E."/>
            <person name="Timmusk T."/>
            <person name="Rivera C."/>
            <person name="Airaksinen M.S."/>
        </authorList>
    </citation>
    <scope>NUCLEOTIDE SEQUENCE [MRNA] (ISOFORM 1)</scope>
    <source>
        <strain>Wistar</strain>
        <tissue>Hippocampus</tissue>
    </source>
</reference>
<reference key="3">
    <citation type="journal article" date="1999" name="Nature">
        <title>The K+/Cl- co-transporter KCC2 renders GABA hyperpolarizing during neuronal maturation.</title>
        <authorList>
            <person name="Rivera C."/>
            <person name="Voipio J."/>
            <person name="Payne J.A."/>
            <person name="Ruusuvuori E."/>
            <person name="Lahtinen H."/>
            <person name="Lamsa K."/>
            <person name="Pirvola U."/>
            <person name="Saarma M."/>
            <person name="Kaila K."/>
        </authorList>
    </citation>
    <scope>FUNCTION</scope>
    <scope>DEVELOPMENTAL STAGE</scope>
    <scope>TISSUE SPECIFICITY</scope>
</reference>
<reference key="4">
    <citation type="journal article" date="2001" name="J. Biol. Chem.">
        <title>A dominant negative mutant of the KCC1 K-Cl cotransporter: both N- and C-terminal cytoplasmic domains are required for K-Cl cotransport activity.</title>
        <authorList>
            <person name="Casula S."/>
            <person name="Shmukler B.E."/>
            <person name="Wilhelm S."/>
            <person name="Stuart-Tilley A.K."/>
            <person name="Su W."/>
            <person name="Chernova M.N."/>
            <person name="Brugnara C."/>
            <person name="Alper S.L."/>
        </authorList>
    </citation>
    <scope>SUBUNIT</scope>
    <scope>FUNCTION</scope>
    <scope>TRANSPORTER ACTIVITY</scope>
</reference>
<reference key="5">
    <citation type="journal article" date="2012" name="J. Biol. Chem.">
        <title>Taurine inhibits K+-Cl- cotransporter KCC2 to regulate embryonic Cl- homeostasis via with-no-lysine (WNK) protein kinase signaling pathway.</title>
        <authorList>
            <person name="Inoue K."/>
            <person name="Furukawa T."/>
            <person name="Kumada T."/>
            <person name="Yamada J."/>
            <person name="Wang T."/>
            <person name="Inoue R."/>
            <person name="Fukuda A."/>
        </authorList>
    </citation>
    <scope>ACTIVITY REGULATION</scope>
    <scope>PHOSPHORYLATION AT THR-929 AND THR-1030</scope>
    <scope>MUTAGENESIS OF THR-929 AND THR-1030</scope>
</reference>
<reference key="6">
    <citation type="journal article" date="2012" name="Nat. Commun.">
        <title>Quantitative maps of protein phosphorylation sites across 14 different rat organs and tissues.</title>
        <authorList>
            <person name="Lundby A."/>
            <person name="Secher A."/>
            <person name="Lage K."/>
            <person name="Nordsborg N.B."/>
            <person name="Dmytriyev A."/>
            <person name="Lundby C."/>
            <person name="Olsen J.V."/>
        </authorList>
    </citation>
    <scope>PHOSPHORYLATION [LARGE SCALE ANALYSIS] AT THR-57; SER-1045; SER-1048 AND SER-1049</scope>
    <scope>IDENTIFICATION BY MASS SPECTROMETRY [LARGE SCALE ANALYSIS]</scope>
</reference>
<reference key="7">
    <citation type="journal article" date="2013" name="Cereb. Cortex">
        <title>An ion transport-independent role for the cation-chloride cotransporter KCC2 in dendritic spinogenesis in vivo.</title>
        <authorList>
            <person name="Fiumelli H."/>
            <person name="Briner A."/>
            <person name="Puskarjov M."/>
            <person name="Blaesse P."/>
            <person name="Belem B.J."/>
            <person name="Dayer A.G."/>
            <person name="Kaila K."/>
            <person name="Martin J.L."/>
            <person name="Vutskits L."/>
        </authorList>
    </citation>
    <scope>FUNCTION</scope>
</reference>
<name>S12A5_RAT</name>
<keyword id="KW-0025">Alternative splicing</keyword>
<keyword id="KW-1003">Cell membrane</keyword>
<keyword id="KW-0966">Cell projection</keyword>
<keyword id="KW-0868">Chloride</keyword>
<keyword id="KW-1015">Disulfide bond</keyword>
<keyword id="KW-0325">Glycoprotein</keyword>
<keyword id="KW-0406">Ion transport</keyword>
<keyword id="KW-0472">Membrane</keyword>
<keyword id="KW-0479">Metal-binding</keyword>
<keyword id="KW-0597">Phosphoprotein</keyword>
<keyword id="KW-0630">Potassium</keyword>
<keyword id="KW-0633">Potassium transport</keyword>
<keyword id="KW-1185">Reference proteome</keyword>
<keyword id="KW-0769">Symport</keyword>
<keyword id="KW-0812">Transmembrane</keyword>
<keyword id="KW-1133">Transmembrane helix</keyword>
<keyword id="KW-0813">Transport</keyword>
<gene>
    <name type="primary">Slc12a5</name>
    <name evidence="10" type="synonym">Kcc2</name>
</gene>
<sequence>MSRRFTVTSLPPAASAASADPESRRHSVADPRRLPREDVKGDGNPKESSPFINSTDTEKGREYDGRNMALFEEEMDTSPMVSSLLSGLANYTNLPQGSKEHEEAENNEGGKKKPVQAPRMGTFMGVYLPCLQNIFGVILFLRLTWVVGIAGIMESFCMVFICCSCTMLTAISMSAIATNGVVPAGGSYYMISRSLGPEFGGAVGLCFYLGTTFAGAMYILGTIEILLAYLFPAMAIFKAEDASGEAAAMLNNMRVYGTCVLTCMATVVFVGVKYVNKFALVFLGCVILSILAIYAGVIKSAFDPPNFPICLLGNRTLSRHGFDVCAKLAWEGNETVTTRLWGLFCSSRLLNATCDEYFTRNNVTEIQGIPGAASGLIKENLWSSYLTKGVIVERRGMPSVGLADGTPVDMDHPYVFSDMTSYFTLLVGIYFPSVTGIMAGSNRSGDLRDAQKSIPTGTILAIATTSAVYISSVVLFGACIEGVVLRDKFGEAVNGNLVVGTLAWPSPWVIVIGSFFSTCGAGLQSLTGAPRLLQAISRDGIVPFLQVFGHGKANGEPTWALLLTACICEIGILIASLDEVAPILSMFFLMCYMFVNLACAVQTLLRTPNWRPRFRYYHWTLSFLGMSLCLALMFICSWYYALVAMLIAGLIYKYIEYRGAEKEWGDGIRGLSLSAARYALLRLEEGPPHTKNWRPQLLVLVRVDQDQNVVHPQLLSLTSQLKAGKGLTIVGSVLEGTFLDNHPQAQRAEESIRRLMEAEKVKGFCQVVISSNLRDGVSHLIQSGGLGGLQHNTVLVGWPRNWRQKEDHQTWRNFIELVRETTAGHLALLVTKNVSMFPGNPERFSEGSIDVWWIVHDGGMLMLLPFLLRHHKVWRKCKMRIFTVAQMDDNSIQMKKDLTTFLYHLRITAEVEVVEMHESDISAYTYEKTLVMEQRSQILKQMHLTKNEREREIQSITDESRGSIRRKNPANTRLRLNVPEETACDNEEKPEEEVQLIHDQSAPSCPSSSPSPGEEPEGEGETDPEKVHLTWTKDKSAAQKNKGPSPVSSEGIKDFFSMKPEWENLNQSNVRRMHTAVRLNEVIVNKSRDAKLVLLNMPGPPRNRNGDENYMEFLEVLTEQLDRVMLVRGGGREVITIYS</sequence>